<name>YQEG_ECOL6</name>
<accession>P63341</accession>
<accession>Q46940</accession>
<dbReference type="EMBL" id="AE014075">
    <property type="protein sequence ID" value="AAN81887.1"/>
    <property type="molecule type" value="Genomic_DNA"/>
</dbReference>
<dbReference type="RefSeq" id="WP_000065950.1">
    <property type="nucleotide sequence ID" value="NZ_CP051263.1"/>
</dbReference>
<dbReference type="SMR" id="P63341"/>
<dbReference type="KEGG" id="ecc:c3442"/>
<dbReference type="eggNOG" id="COG0814">
    <property type="taxonomic scope" value="Bacteria"/>
</dbReference>
<dbReference type="HOGENOM" id="CLU_052043_1_1_6"/>
<dbReference type="BioCyc" id="ECOL199310:C3442-MONOMER"/>
<dbReference type="Proteomes" id="UP000001410">
    <property type="component" value="Chromosome"/>
</dbReference>
<dbReference type="GO" id="GO:0005886">
    <property type="term" value="C:plasma membrane"/>
    <property type="evidence" value="ECO:0007669"/>
    <property type="project" value="UniProtKB-SubCell"/>
</dbReference>
<dbReference type="GO" id="GO:0003333">
    <property type="term" value="P:amino acid transmembrane transport"/>
    <property type="evidence" value="ECO:0007669"/>
    <property type="project" value="InterPro"/>
</dbReference>
<dbReference type="FunFam" id="1.20.1740.10:FF:000028">
    <property type="entry name" value="Inner membrane transporter YqeG"/>
    <property type="match status" value="1"/>
</dbReference>
<dbReference type="Gene3D" id="1.20.1740.10">
    <property type="entry name" value="Amino acid/polyamine transporter I"/>
    <property type="match status" value="1"/>
</dbReference>
<dbReference type="InterPro" id="IPR018227">
    <property type="entry name" value="Amino_acid_transport_2"/>
</dbReference>
<dbReference type="PANTHER" id="PTHR35334:SF3">
    <property type="entry name" value="INNER MEMBRANE TRANSPORT PROTEIN YQEG"/>
    <property type="match status" value="1"/>
</dbReference>
<dbReference type="PANTHER" id="PTHR35334">
    <property type="entry name" value="SERINE TRANSPORTER"/>
    <property type="match status" value="1"/>
</dbReference>
<dbReference type="Pfam" id="PF03222">
    <property type="entry name" value="Trp_Tyr_perm"/>
    <property type="match status" value="1"/>
</dbReference>
<comment type="subcellular location">
    <subcellularLocation>
        <location evidence="1">Cell inner membrane</location>
        <topology evidence="1">Multi-pass membrane protein</topology>
    </subcellularLocation>
</comment>
<comment type="similarity">
    <text evidence="3">Belongs to the amino acid/polyamine transporter 2 family. SdaC/TdcC subfamily.</text>
</comment>
<keyword id="KW-0997">Cell inner membrane</keyword>
<keyword id="KW-1003">Cell membrane</keyword>
<keyword id="KW-0472">Membrane</keyword>
<keyword id="KW-1185">Reference proteome</keyword>
<keyword id="KW-0812">Transmembrane</keyword>
<keyword id="KW-1133">Transmembrane helix</keyword>
<keyword id="KW-0813">Transport</keyword>
<proteinExistence type="inferred from homology"/>
<gene>
    <name type="primary">yqeG</name>
    <name type="ordered locus">c3442</name>
</gene>
<organism>
    <name type="scientific">Escherichia coli O6:H1 (strain CFT073 / ATCC 700928 / UPEC)</name>
    <dbReference type="NCBI Taxonomy" id="199310"/>
    <lineage>
        <taxon>Bacteria</taxon>
        <taxon>Pseudomonadati</taxon>
        <taxon>Pseudomonadota</taxon>
        <taxon>Gammaproteobacteria</taxon>
        <taxon>Enterobacterales</taxon>
        <taxon>Enterobacteriaceae</taxon>
        <taxon>Escherichia</taxon>
    </lineage>
</organism>
<sequence length="409" mass="45099">MSNIWSKEETLWSFALYGTAVGAGTLFLPIQLGSAGAVVLFITALVAWPLTYWPHKALCQFILSSKTSAGEGITGAVTHYYGKKIGNLITTLYFIAFFVVVLIYAVAITNSLTEQLAKHMVIDLRIRMLVSLGVVLILNLIFLMGRHATIRVMGFLVFPLIAYFLFLSIYLVGSWQPDLLTTQVEFNQNTLHQIWISIPVMVFAFSHTPIISTFAIDRREKYGEHAMDKCKKIMKVAYLIICISVLFFVFSCLLSIPPSYIEAAKEEGVTILSALSMLPNAPAWLSISGIIVAVVAMSKSFLGTYFGVIEGATEVVKTTLQQVGVKKSRAFNRALSIMLVSLITFIVCCINPNAISMIYAISGPLIAMILFIMPTLSTYLIPALKPWRSIGNLITLIVGILCVSVMFFS</sequence>
<feature type="chain" id="PRO_0000093815" description="Inner membrane transport protein YqeG">
    <location>
        <begin position="1"/>
        <end position="409"/>
    </location>
</feature>
<feature type="topological domain" description="Periplasmic" evidence="2">
    <location>
        <begin position="1"/>
        <end position="25"/>
    </location>
</feature>
<feature type="transmembrane region" description="Helical" evidence="2">
    <location>
        <begin position="26"/>
        <end position="46"/>
    </location>
</feature>
<feature type="topological domain" description="Cytoplasmic" evidence="2">
    <location>
        <begin position="47"/>
        <end position="87"/>
    </location>
</feature>
<feature type="transmembrane region" description="Helical" evidence="2">
    <location>
        <begin position="88"/>
        <end position="108"/>
    </location>
</feature>
<feature type="topological domain" description="Periplasmic" evidence="2">
    <location>
        <begin position="109"/>
        <end position="127"/>
    </location>
</feature>
<feature type="transmembrane region" description="Helical" evidence="2">
    <location>
        <begin position="128"/>
        <end position="148"/>
    </location>
</feature>
<feature type="topological domain" description="Cytoplasmic" evidence="2">
    <location>
        <begin position="149"/>
        <end position="151"/>
    </location>
</feature>
<feature type="transmembrane region" description="Helical" evidence="2">
    <location>
        <begin position="152"/>
        <end position="172"/>
    </location>
</feature>
<feature type="topological domain" description="Periplasmic" evidence="2">
    <location>
        <begin position="173"/>
        <end position="193"/>
    </location>
</feature>
<feature type="transmembrane region" description="Helical" evidence="2">
    <location>
        <begin position="194"/>
        <end position="214"/>
    </location>
</feature>
<feature type="topological domain" description="Cytoplasmic" evidence="2">
    <location>
        <begin position="215"/>
        <end position="235"/>
    </location>
</feature>
<feature type="transmembrane region" description="Helical" evidence="2">
    <location>
        <begin position="236"/>
        <end position="256"/>
    </location>
</feature>
<feature type="topological domain" description="Periplasmic" evidence="2">
    <location>
        <begin position="257"/>
        <end position="276"/>
    </location>
</feature>
<feature type="transmembrane region" description="Helical" evidence="2">
    <location>
        <begin position="277"/>
        <end position="297"/>
    </location>
</feature>
<feature type="topological domain" description="Cytoplasmic" evidence="2">
    <location>
        <begin position="298"/>
        <end position="329"/>
    </location>
</feature>
<feature type="transmembrane region" description="Helical" evidence="2">
    <location>
        <begin position="330"/>
        <end position="350"/>
    </location>
</feature>
<feature type="topological domain" description="Periplasmic" evidence="2">
    <location>
        <begin position="351"/>
        <end position="353"/>
    </location>
</feature>
<feature type="transmembrane region" description="Helical" evidence="2">
    <location>
        <begin position="354"/>
        <end position="374"/>
    </location>
</feature>
<feature type="topological domain" description="Cytoplasmic" evidence="2">
    <location>
        <begin position="375"/>
        <end position="388"/>
    </location>
</feature>
<feature type="transmembrane region" description="Helical" evidence="2">
    <location>
        <begin position="389"/>
        <end position="409"/>
    </location>
</feature>
<evidence type="ECO:0000250" key="1"/>
<evidence type="ECO:0000255" key="2"/>
<evidence type="ECO:0000305" key="3"/>
<protein>
    <recommendedName>
        <fullName>Inner membrane transport protein YqeG</fullName>
    </recommendedName>
</protein>
<reference key="1">
    <citation type="journal article" date="2002" name="Proc. Natl. Acad. Sci. U.S.A.">
        <title>Extensive mosaic structure revealed by the complete genome sequence of uropathogenic Escherichia coli.</title>
        <authorList>
            <person name="Welch R.A."/>
            <person name="Burland V."/>
            <person name="Plunkett G. III"/>
            <person name="Redford P."/>
            <person name="Roesch P."/>
            <person name="Rasko D."/>
            <person name="Buckles E.L."/>
            <person name="Liou S.-R."/>
            <person name="Boutin A."/>
            <person name="Hackett J."/>
            <person name="Stroud D."/>
            <person name="Mayhew G.F."/>
            <person name="Rose D.J."/>
            <person name="Zhou S."/>
            <person name="Schwartz D.C."/>
            <person name="Perna N.T."/>
            <person name="Mobley H.L.T."/>
            <person name="Donnenberg M.S."/>
            <person name="Blattner F.R."/>
        </authorList>
    </citation>
    <scope>NUCLEOTIDE SEQUENCE [LARGE SCALE GENOMIC DNA]</scope>
    <source>
        <strain>CFT073 / ATCC 700928 / UPEC</strain>
    </source>
</reference>